<reference key="1">
    <citation type="journal article" date="2004" name="Arch. Biochem. Biophys.">
        <title>Molecular cloning and biological characterization of novel antimicrobial peptides, pilosulin 3 and pilosulin 4, from a species of the Australian ant genus Myrmecia.</title>
        <authorList>
            <person name="Inagaki H."/>
            <person name="Akagi M."/>
            <person name="Imai H.T."/>
            <person name="Taylor R.W."/>
            <person name="Kubo T."/>
        </authorList>
    </citation>
    <scope>NUCLEOTIDE SEQUENCE [MRNA]</scope>
    <scope>FUNCTION</scope>
    <scope>SYNTHESIS OF 51-73</scope>
    <source>
        <tissue>Venom gland</tissue>
    </source>
</reference>
<proteinExistence type="inferred from homology"/>
<keyword id="KW-0027">Amidation</keyword>
<keyword id="KW-0044">Antibiotic</keyword>
<keyword id="KW-0929">Antimicrobial</keyword>
<keyword id="KW-0964">Secreted</keyword>
<keyword id="KW-0732">Signal</keyword>
<protein>
    <recommendedName>
        <fullName evidence="5">M-myrmeciitoxin-Mb1a</fullName>
        <shortName evidence="5">M-MIITX-Mb1a</shortName>
    </recommendedName>
    <alternativeName>
        <fullName evidence="4">Pilosulin-3</fullName>
    </alternativeName>
</protein>
<comment type="function">
    <text evidence="3">Shows moderate activity against E.coli and S.aureus (MIC&lt;25 uM), slight activity against B.subtilis (MIC&lt;50 uM), and no activity against L.garvieae, P.aeruginosa, C.albicans, and S.cerevisiae. Has no hemolytic nor cytolytic activity. Causes an IgE-independent histamine release.</text>
</comment>
<comment type="subcellular location">
    <subcellularLocation>
        <location evidence="6">Secreted</location>
    </subcellularLocation>
</comment>
<comment type="tissue specificity">
    <text evidence="6">Expressed by the venom gland.</text>
</comment>
<comment type="similarity">
    <text evidence="5">Belongs to the formicidae venom precursor-01 superfamily. Ant pilosulin family.</text>
</comment>
<comment type="caution">
    <text evidence="5">M.banksi is a member of the M.pilosula complex, but is clearly distinct from M.pilosula species.</text>
</comment>
<comment type="caution">
    <text evidence="5">The name pilosulin-3 has also been attributed by Davies et al., 2004 to a heterodimer from M.pilosula.</text>
</comment>
<feature type="signal peptide" evidence="2">
    <location>
        <begin position="1"/>
        <end position="26"/>
    </location>
</feature>
<feature type="propeptide" id="PRO_0000035166" evidence="6">
    <location>
        <begin position="27"/>
        <end position="50"/>
    </location>
</feature>
<feature type="peptide" id="PRO_0000035167" description="M-myrmeciitoxin-Mb1a" evidence="6">
    <location>
        <begin position="51"/>
        <end position="73"/>
    </location>
</feature>
<feature type="modified residue" description="Glutamine amide" evidence="1">
    <location>
        <position position="73"/>
    </location>
</feature>
<evidence type="ECO:0000250" key="1">
    <source>
        <dbReference type="UniProtKB" id="P0C023"/>
    </source>
</evidence>
<evidence type="ECO:0000255" key="2"/>
<evidence type="ECO:0000269" key="3">
    <source>
    </source>
</evidence>
<evidence type="ECO:0000303" key="4">
    <source>
    </source>
</evidence>
<evidence type="ECO:0000305" key="5"/>
<evidence type="ECO:0000305" key="6">
    <source>
    </source>
</evidence>
<sequence>MKLSCLLLTLAIIVVLTIVHAPNVEAKALADPESDAVGFADAVGEADPNAIIGLVSKGTCVLVKTVCKKVLKQG</sequence>
<dbReference type="EMBL" id="AB128064">
    <property type="protein sequence ID" value="BAD36779.1"/>
    <property type="molecule type" value="mRNA"/>
</dbReference>
<dbReference type="GO" id="GO:0005576">
    <property type="term" value="C:extracellular region"/>
    <property type="evidence" value="ECO:0007669"/>
    <property type="project" value="UniProtKB-SubCell"/>
</dbReference>
<dbReference type="GO" id="GO:0042742">
    <property type="term" value="P:defense response to bacterium"/>
    <property type="evidence" value="ECO:0007669"/>
    <property type="project" value="UniProtKB-KW"/>
</dbReference>
<dbReference type="InterPro" id="IPR049518">
    <property type="entry name" value="Pilosulin"/>
</dbReference>
<dbReference type="Pfam" id="PF17499">
    <property type="entry name" value="Pilosulin"/>
    <property type="match status" value="1"/>
</dbReference>
<organism>
    <name type="scientific">Myrmecia banksi</name>
    <name type="common">Jack jumper ant</name>
    <name type="synonym">Australian jumper ant</name>
    <dbReference type="NCBI Taxonomy" id="36171"/>
    <lineage>
        <taxon>Eukaryota</taxon>
        <taxon>Metazoa</taxon>
        <taxon>Ecdysozoa</taxon>
        <taxon>Arthropoda</taxon>
        <taxon>Hexapoda</taxon>
        <taxon>Insecta</taxon>
        <taxon>Pterygota</taxon>
        <taxon>Neoptera</taxon>
        <taxon>Endopterygota</taxon>
        <taxon>Hymenoptera</taxon>
        <taxon>Apocrita</taxon>
        <taxon>Aculeata</taxon>
        <taxon>Formicoidea</taxon>
        <taxon>Formicidae</taxon>
        <taxon>Myrmeciinae</taxon>
        <taxon>Myrmeciini</taxon>
        <taxon>Myrmecia</taxon>
    </lineage>
</organism>
<name>TX1A_MYRBA</name>
<accession>Q68Y23</accession>